<keyword id="KW-0235">DNA replication</keyword>
<keyword id="KW-0238">DNA-binding</keyword>
<keyword id="KW-0639">Primosome</keyword>
<keyword id="KW-1185">Reference proteome</keyword>
<evidence type="ECO:0000255" key="1">
    <source>
        <dbReference type="HAMAP-Rule" id="MF_00720"/>
    </source>
</evidence>
<accession>A6VMD5</accession>
<organism>
    <name type="scientific">Actinobacillus succinogenes (strain ATCC 55618 / DSM 22257 / CCUG 43843 / 130Z)</name>
    <dbReference type="NCBI Taxonomy" id="339671"/>
    <lineage>
        <taxon>Bacteria</taxon>
        <taxon>Pseudomonadati</taxon>
        <taxon>Pseudomonadota</taxon>
        <taxon>Gammaproteobacteria</taxon>
        <taxon>Pasteurellales</taxon>
        <taxon>Pasteurellaceae</taxon>
        <taxon>Actinobacillus</taxon>
    </lineage>
</organism>
<dbReference type="EMBL" id="CP000746">
    <property type="protein sequence ID" value="ABR74132.1"/>
    <property type="molecule type" value="Genomic_DNA"/>
</dbReference>
<dbReference type="RefSeq" id="WP_012072510.1">
    <property type="nucleotide sequence ID" value="NC_009655.1"/>
</dbReference>
<dbReference type="SMR" id="A6VMD5"/>
<dbReference type="STRING" id="339671.Asuc_0760"/>
<dbReference type="KEGG" id="asu:Asuc_0760"/>
<dbReference type="eggNOG" id="COG2965">
    <property type="taxonomic scope" value="Bacteria"/>
</dbReference>
<dbReference type="HOGENOM" id="CLU_166075_0_0_6"/>
<dbReference type="OrthoDB" id="9180733at2"/>
<dbReference type="Proteomes" id="UP000001114">
    <property type="component" value="Chromosome"/>
</dbReference>
<dbReference type="GO" id="GO:1990077">
    <property type="term" value="C:primosome complex"/>
    <property type="evidence" value="ECO:0007669"/>
    <property type="project" value="UniProtKB-KW"/>
</dbReference>
<dbReference type="GO" id="GO:0003697">
    <property type="term" value="F:single-stranded DNA binding"/>
    <property type="evidence" value="ECO:0007669"/>
    <property type="project" value="UniProtKB-UniRule"/>
</dbReference>
<dbReference type="GO" id="GO:0006269">
    <property type="term" value="P:DNA replication, synthesis of primer"/>
    <property type="evidence" value="ECO:0007669"/>
    <property type="project" value="UniProtKB-KW"/>
</dbReference>
<dbReference type="Gene3D" id="2.40.50.140">
    <property type="entry name" value="Nucleic acid-binding proteins"/>
    <property type="match status" value="1"/>
</dbReference>
<dbReference type="HAMAP" id="MF_00720">
    <property type="entry name" value="PriB"/>
    <property type="match status" value="1"/>
</dbReference>
<dbReference type="InterPro" id="IPR012340">
    <property type="entry name" value="NA-bd_OB-fold"/>
</dbReference>
<dbReference type="InterPro" id="IPR000424">
    <property type="entry name" value="Primosome_PriB/ssb"/>
</dbReference>
<dbReference type="InterPro" id="IPR023646">
    <property type="entry name" value="Prisomal_replication_PriB"/>
</dbReference>
<dbReference type="NCBIfam" id="TIGR04418">
    <property type="entry name" value="PriB_gamma"/>
    <property type="match status" value="1"/>
</dbReference>
<dbReference type="Pfam" id="PF22657">
    <property type="entry name" value="SSB_1"/>
    <property type="match status" value="1"/>
</dbReference>
<dbReference type="PIRSF" id="PIRSF003135">
    <property type="entry name" value="Primosomal_n"/>
    <property type="match status" value="1"/>
</dbReference>
<dbReference type="SUPFAM" id="SSF50249">
    <property type="entry name" value="Nucleic acid-binding proteins"/>
    <property type="match status" value="1"/>
</dbReference>
<dbReference type="PROSITE" id="PS50935">
    <property type="entry name" value="SSB"/>
    <property type="match status" value="1"/>
</dbReference>
<reference key="1">
    <citation type="journal article" date="2010" name="BMC Genomics">
        <title>A genomic perspective on the potential of Actinobacillus succinogenes for industrial succinate production.</title>
        <authorList>
            <person name="McKinlay J.B."/>
            <person name="Laivenieks M."/>
            <person name="Schindler B.D."/>
            <person name="McKinlay A.A."/>
            <person name="Siddaramappa S."/>
            <person name="Challacombe J.F."/>
            <person name="Lowry S.R."/>
            <person name="Clum A."/>
            <person name="Lapidus A.L."/>
            <person name="Burkhart K.B."/>
            <person name="Harkins V."/>
            <person name="Vieille C."/>
        </authorList>
    </citation>
    <scope>NUCLEOTIDE SEQUENCE [LARGE SCALE GENOMIC DNA]</scope>
    <source>
        <strain>ATCC 55618 / DSM 22257 / CCUG 43843 / 130Z</strain>
    </source>
</reference>
<name>PRIB_ACTSZ</name>
<feature type="chain" id="PRO_1000083271" description="Replication restart protein PriB">
    <location>
        <begin position="1"/>
        <end position="107"/>
    </location>
</feature>
<feature type="domain" description="SSB" evidence="1">
    <location>
        <begin position="8"/>
        <end position="107"/>
    </location>
</feature>
<sequence length="107" mass="12063">MLKSNLKIENRLSLIGVTESVKRSKSPNGIEHCRIWLEHRSEQQEAGLIRQARCKMPIQISGHQLIHKTQGITVGSKILVVGFITSHKQTNGLNQLVLHAEHIELLD</sequence>
<gene>
    <name evidence="1" type="primary">priB</name>
    <name type="ordered locus">Asuc_0760</name>
</gene>
<protein>
    <recommendedName>
        <fullName evidence="1">Replication restart protein PriB</fullName>
    </recommendedName>
</protein>
<comment type="function">
    <text evidence="1">Involved in the restart of stalled replication forks, which reloads the replicative helicase on sites other than the origin of replication; the PriA-PriB pathway is the major replication restart pathway. During primosome assembly it facilitates complex formation between PriA and DnaT on DNA; stabilizes PriA on DNA. Stimulates the DNA unwinding activity of PriA helicase.</text>
</comment>
<comment type="subunit">
    <text evidence="1">Homodimer. Interacts with PriA and DnaT. Component of the replication restart primosome. Primosome assembly occurs via a 'hand-off' mechanism. PriA binds to replication forks, subsequently PriB then DnaT bind; DnaT then displaces ssDNA to generate the helicase loading substrate.</text>
</comment>
<comment type="similarity">
    <text evidence="1">Belongs to the PriB family.</text>
</comment>
<proteinExistence type="inferred from homology"/>